<protein>
    <recommendedName>
        <fullName evidence="5">Phylloxin-S1</fullName>
        <shortName evidence="5">PLX-S1</shortName>
    </recommendedName>
    <alternativeName>
        <fullName evidence="4">Phylloxin</fullName>
    </alternativeName>
</protein>
<accession>Q5DVA6</accession>
<sequence length="64" mass="7153">MVFLKKSLLLVLFVGLVSLSICEENKREEHEEVEENAEKAEEKRGWMSKIASGIGTFLSGVQQG</sequence>
<comment type="function">
    <text evidence="1">Antimicrobial peptide against both Gram-positive and Gram-negative bacteria.</text>
</comment>
<comment type="subcellular location">
    <subcellularLocation>
        <location evidence="3">Secreted</location>
    </subcellularLocation>
</comment>
<comment type="tissue specificity">
    <text evidence="7">Expressed by the skin glands.</text>
</comment>
<comment type="mass spectrometry" mass="1967.56" method="MALDI" evidence="3"/>
<comment type="similarity">
    <text evidence="6">Belongs to the frog skin active peptide (FSAP) family. Phylloxin subfamily.</text>
</comment>
<comment type="online information" name="The antimicrobial peptide database">
    <link uri="https://wangapd3.com/database/query_output.php?ID=00901"/>
</comment>
<feature type="signal peptide" evidence="2">
    <location>
        <begin position="1"/>
        <end position="22"/>
    </location>
</feature>
<feature type="propeptide" id="PRO_0000449667" evidence="7">
    <location>
        <begin position="23"/>
        <end position="44"/>
    </location>
</feature>
<feature type="peptide" id="PRO_5004254946" description="Phylloxin-S1" evidence="3">
    <location>
        <begin position="45"/>
        <end position="63"/>
    </location>
</feature>
<feature type="modified residue" description="Glutamine amide" evidence="3">
    <location>
        <position position="63"/>
    </location>
</feature>
<name>PLX1_PHYSA</name>
<organism>
    <name type="scientific">Phyllomedusa sauvagei</name>
    <name type="common">Sauvage's leaf frog</name>
    <dbReference type="NCBI Taxonomy" id="8395"/>
    <lineage>
        <taxon>Eukaryota</taxon>
        <taxon>Metazoa</taxon>
        <taxon>Chordata</taxon>
        <taxon>Craniata</taxon>
        <taxon>Vertebrata</taxon>
        <taxon>Euteleostomi</taxon>
        <taxon>Amphibia</taxon>
        <taxon>Batrachia</taxon>
        <taxon>Anura</taxon>
        <taxon>Neobatrachia</taxon>
        <taxon>Hyloidea</taxon>
        <taxon>Hylidae</taxon>
        <taxon>Phyllomedusinae</taxon>
        <taxon>Phyllomedusa</taxon>
    </lineage>
</organism>
<evidence type="ECO:0000250" key="1">
    <source>
        <dbReference type="UniProtKB" id="P81565"/>
    </source>
</evidence>
<evidence type="ECO:0000255" key="2"/>
<evidence type="ECO:0000269" key="3">
    <source>
    </source>
</evidence>
<evidence type="ECO:0000303" key="4">
    <source>
    </source>
</evidence>
<evidence type="ECO:0000303" key="5">
    <source>
    </source>
</evidence>
<evidence type="ECO:0000305" key="6"/>
<evidence type="ECO:0000305" key="7">
    <source>
    </source>
</evidence>
<proteinExistence type="evidence at protein level"/>
<gene>
    <name evidence="4" type="primary">PLX-S</name>
</gene>
<reference key="1">
    <citation type="journal article" date="2005" name="Regul. Pept.">
        <title>Dermatoxin and phylloxin from the waxy monkey frog, Phyllomedusa sauvagei: cloning of precursor cDNAs and structural characterization from lyophilized skin secretion.</title>
        <authorList>
            <person name="Chen T."/>
            <person name="Walker B."/>
            <person name="Zhou M."/>
            <person name="Shaw C."/>
        </authorList>
    </citation>
    <scope>NUCLEOTIDE SEQUENCE [MRNA]</scope>
    <scope>PROTEIN SEQUENCE OF 45-63</scope>
    <scope>MASS SPECTROMETRY</scope>
    <scope>AMIDATION AT GLN-63</scope>
    <scope>SUBCELLULAR LOCATION</scope>
    <source>
        <tissue>Skin secretion</tissue>
    </source>
</reference>
<reference key="2">
    <citation type="journal article" date="2008" name="Peptides">
        <title>A consistent nomenclature of antimicrobial peptides isolated from frogs of the subfamily Phyllomedusinae.</title>
        <authorList>
            <person name="Amiche M."/>
            <person name="Ladram A."/>
            <person name="Nicolas P."/>
        </authorList>
    </citation>
    <scope>NOMENCLATURE</scope>
</reference>
<keyword id="KW-0027">Amidation</keyword>
<keyword id="KW-0878">Amphibian defense peptide</keyword>
<keyword id="KW-0044">Antibiotic</keyword>
<keyword id="KW-0929">Antimicrobial</keyword>
<keyword id="KW-0165">Cleavage on pair of basic residues</keyword>
<keyword id="KW-0903">Direct protein sequencing</keyword>
<keyword id="KW-0391">Immunity</keyword>
<keyword id="KW-0399">Innate immunity</keyword>
<keyword id="KW-0964">Secreted</keyword>
<keyword id="KW-0732">Signal</keyword>
<dbReference type="EMBL" id="AJ865344">
    <property type="protein sequence ID" value="CAI26287.1"/>
    <property type="molecule type" value="mRNA"/>
</dbReference>
<dbReference type="GO" id="GO:0005576">
    <property type="term" value="C:extracellular region"/>
    <property type="evidence" value="ECO:0007669"/>
    <property type="project" value="UniProtKB-SubCell"/>
</dbReference>
<dbReference type="GO" id="GO:0042742">
    <property type="term" value="P:defense response to bacterium"/>
    <property type="evidence" value="ECO:0007669"/>
    <property type="project" value="UniProtKB-KW"/>
</dbReference>
<dbReference type="GO" id="GO:0045087">
    <property type="term" value="P:innate immune response"/>
    <property type="evidence" value="ECO:0007669"/>
    <property type="project" value="UniProtKB-KW"/>
</dbReference>
<dbReference type="InterPro" id="IPR004275">
    <property type="entry name" value="Frog_antimicrobial_propeptide"/>
</dbReference>
<dbReference type="InterPro" id="IPR016322">
    <property type="entry name" value="FSAP"/>
</dbReference>
<dbReference type="Pfam" id="PF03032">
    <property type="entry name" value="FSAP_sig_propep"/>
    <property type="match status" value="1"/>
</dbReference>
<dbReference type="PIRSF" id="PIRSF001822">
    <property type="entry name" value="Dermaseptin_precursor"/>
    <property type="match status" value="1"/>
</dbReference>